<name>VP20_BPAPS</name>
<feature type="chain" id="PRO_0000077861" description="Putative protein p20">
    <location>
        <begin position="1"/>
        <end position="98"/>
    </location>
</feature>
<feature type="region of interest" description="Disordered" evidence="1">
    <location>
        <begin position="77"/>
        <end position="98"/>
    </location>
</feature>
<evidence type="ECO:0000256" key="1">
    <source>
        <dbReference type="SAM" id="MobiDB-lite"/>
    </source>
</evidence>
<organismHost>
    <name type="scientific">Escherichia coli</name>
    <dbReference type="NCBI Taxonomy" id="562"/>
</organismHost>
<organism>
    <name type="scientific">Acyrthosiphon pisum secondary endosymbiont phage 1</name>
    <name type="common">Bacteriophage APSE-1</name>
    <dbReference type="NCBI Taxonomy" id="2682836"/>
    <lineage>
        <taxon>Viruses</taxon>
        <taxon>Duplodnaviria</taxon>
        <taxon>Heunggongvirae</taxon>
        <taxon>Uroviricota</taxon>
        <taxon>Caudoviricetes</taxon>
        <taxon>Sendosyvirus</taxon>
        <taxon>Sendosyvirus APSE1</taxon>
    </lineage>
</organism>
<gene>
    <name type="primary">20</name>
</gene>
<accession>Q9T1S8</accession>
<keyword id="KW-1185">Reference proteome</keyword>
<proteinExistence type="predicted"/>
<dbReference type="EMBL" id="AF157835">
    <property type="protein sequence ID" value="AAF03963.1"/>
    <property type="molecule type" value="Genomic_DNA"/>
</dbReference>
<dbReference type="RefSeq" id="NP_050981.1">
    <property type="nucleotide sequence ID" value="NC_000935.1"/>
</dbReference>
<dbReference type="KEGG" id="vg:1262314"/>
<dbReference type="Proteomes" id="UP000000853">
    <property type="component" value="Genome"/>
</dbReference>
<sequence>MPLINVAGSLLYSALYFSAESEYMQKAHSASDLSYFFASGSNQTERAGSYIGSRQIRCLSSIGSSALTKFVVSLKQPNPPVEPSSKALSHASPPSVSS</sequence>
<reference key="1">
    <citation type="journal article" date="1999" name="Virology">
        <title>Isolation and characterization of APSE-1, a bacteriophage infecting the secondary endosymbiont of acyrthosiphon pisum.</title>
        <authorList>
            <person name="van der Wilk F."/>
            <person name="Dullemans A.M."/>
            <person name="Verbeek M."/>
            <person name="van den Heuvel J.F.J.M."/>
        </authorList>
    </citation>
    <scope>NUCLEOTIDE SEQUENCE [LARGE SCALE GENOMIC DNA]</scope>
</reference>
<protein>
    <recommendedName>
        <fullName>Putative protein p20</fullName>
    </recommendedName>
</protein>